<sequence>MREIVHLQAGQCGNQIGAKFWEVISDEHGIDPTGTYHGDSDLQLDRINVYYNEASGGKYVPRAVLVDLEPGTMDSVRSGAFGQVFRPDNFVFGQSGAGNNWAKGHYTEGAELVDSVLDVVRKEAESCDCLQGFQLTHSLGGGTGSGMGTLLISKIREEYPDRIMNTFSVVPSPKVSDTVVEPYNATLSVHQLVENTDETYCIDNEALYDICFRTLKLTTPSYGDLNHLVSATMSGVTTCLRFPGQLNADLRKLAVNMVPFPRLHFFMPGFAPLTSRGSQQYRSLTVPELTQQMFDGKNMMAACDPRHGRYLTVAAIFRGRMSMKEVDEQMLNVQNKNSSYFVEWIPNNVKTAVCDIPPRGLKMAATFIGNSTAIQELFKRISEQFTAMFRRKAFLHWYTGEGMDEMEFTEAESNMNDLVSEYQQYQDATAEEEGEFEEEGEEELA</sequence>
<evidence type="ECO:0000250" key="1"/>
<evidence type="ECO:0000250" key="2">
    <source>
        <dbReference type="UniProtKB" id="A2AQ07"/>
    </source>
</evidence>
<evidence type="ECO:0000250" key="3">
    <source>
        <dbReference type="UniProtKB" id="P07437"/>
    </source>
</evidence>
<evidence type="ECO:0000250" key="4">
    <source>
        <dbReference type="UniProtKB" id="P68363"/>
    </source>
</evidence>
<evidence type="ECO:0000250" key="5">
    <source>
        <dbReference type="UniProtKB" id="Q13509"/>
    </source>
</evidence>
<evidence type="ECO:0000250" key="6">
    <source>
        <dbReference type="UniProtKB" id="Q2T9S0"/>
    </source>
</evidence>
<evidence type="ECO:0000250" key="7">
    <source>
        <dbReference type="UniProtKB" id="Q71U36"/>
    </source>
</evidence>
<evidence type="ECO:0000256" key="8">
    <source>
        <dbReference type="SAM" id="MobiDB-lite"/>
    </source>
</evidence>
<evidence type="ECO:0000305" key="9"/>
<accession>Q9YHC3</accession>
<name>TBB1_GADMO</name>
<keyword id="KW-0963">Cytoplasm</keyword>
<keyword id="KW-0206">Cytoskeleton</keyword>
<keyword id="KW-0342">GTP-binding</keyword>
<keyword id="KW-1017">Isopeptide bond</keyword>
<keyword id="KW-0460">Magnesium</keyword>
<keyword id="KW-0479">Metal-binding</keyword>
<keyword id="KW-0493">Microtubule</keyword>
<keyword id="KW-0547">Nucleotide-binding</keyword>
<keyword id="KW-1185">Reference proteome</keyword>
<dbReference type="EMBL" id="AF102890">
    <property type="protein sequence ID" value="AAC78686.1"/>
    <property type="molecule type" value="mRNA"/>
</dbReference>
<dbReference type="SMR" id="Q9YHC3"/>
<dbReference type="STRING" id="8049.ENSGMOP00000006761"/>
<dbReference type="Proteomes" id="UP000694546">
    <property type="component" value="Unplaced"/>
</dbReference>
<dbReference type="GO" id="GO:0005737">
    <property type="term" value="C:cytoplasm"/>
    <property type="evidence" value="ECO:0007669"/>
    <property type="project" value="UniProtKB-KW"/>
</dbReference>
<dbReference type="GO" id="GO:0005874">
    <property type="term" value="C:microtubule"/>
    <property type="evidence" value="ECO:0007669"/>
    <property type="project" value="UniProtKB-KW"/>
</dbReference>
<dbReference type="GO" id="GO:0005525">
    <property type="term" value="F:GTP binding"/>
    <property type="evidence" value="ECO:0007669"/>
    <property type="project" value="UniProtKB-KW"/>
</dbReference>
<dbReference type="GO" id="GO:0003924">
    <property type="term" value="F:GTPase activity"/>
    <property type="evidence" value="ECO:0007669"/>
    <property type="project" value="InterPro"/>
</dbReference>
<dbReference type="GO" id="GO:0046872">
    <property type="term" value="F:metal ion binding"/>
    <property type="evidence" value="ECO:0007669"/>
    <property type="project" value="UniProtKB-KW"/>
</dbReference>
<dbReference type="GO" id="GO:0005200">
    <property type="term" value="F:structural constituent of cytoskeleton"/>
    <property type="evidence" value="ECO:0007669"/>
    <property type="project" value="InterPro"/>
</dbReference>
<dbReference type="GO" id="GO:0007017">
    <property type="term" value="P:microtubule-based process"/>
    <property type="evidence" value="ECO:0007669"/>
    <property type="project" value="InterPro"/>
</dbReference>
<dbReference type="CDD" id="cd02187">
    <property type="entry name" value="beta_tubulin"/>
    <property type="match status" value="1"/>
</dbReference>
<dbReference type="FunFam" id="1.10.287.600:FF:000006">
    <property type="entry name" value="Tubulin beta chain"/>
    <property type="match status" value="1"/>
</dbReference>
<dbReference type="FunFam" id="3.30.1330.20:FF:000002">
    <property type="entry name" value="Tubulin beta chain"/>
    <property type="match status" value="1"/>
</dbReference>
<dbReference type="FunFam" id="3.40.50.1440:FF:000003">
    <property type="entry name" value="Tubulin beta chain"/>
    <property type="match status" value="1"/>
</dbReference>
<dbReference type="Gene3D" id="1.10.287.600">
    <property type="entry name" value="Helix hairpin bin"/>
    <property type="match status" value="1"/>
</dbReference>
<dbReference type="Gene3D" id="3.30.1330.20">
    <property type="entry name" value="Tubulin/FtsZ, C-terminal domain"/>
    <property type="match status" value="1"/>
</dbReference>
<dbReference type="Gene3D" id="3.40.50.1440">
    <property type="entry name" value="Tubulin/FtsZ, GTPase domain"/>
    <property type="match status" value="1"/>
</dbReference>
<dbReference type="InterPro" id="IPR013838">
    <property type="entry name" value="Beta-tubulin_BS"/>
</dbReference>
<dbReference type="InterPro" id="IPR002453">
    <property type="entry name" value="Beta_tubulin"/>
</dbReference>
<dbReference type="InterPro" id="IPR008280">
    <property type="entry name" value="Tub_FtsZ_C"/>
</dbReference>
<dbReference type="InterPro" id="IPR000217">
    <property type="entry name" value="Tubulin"/>
</dbReference>
<dbReference type="InterPro" id="IPR037103">
    <property type="entry name" value="Tubulin/FtsZ-like_C"/>
</dbReference>
<dbReference type="InterPro" id="IPR018316">
    <property type="entry name" value="Tubulin/FtsZ_2-layer-sand-dom"/>
</dbReference>
<dbReference type="InterPro" id="IPR036525">
    <property type="entry name" value="Tubulin/FtsZ_GTPase_sf"/>
</dbReference>
<dbReference type="InterPro" id="IPR023123">
    <property type="entry name" value="Tubulin_C"/>
</dbReference>
<dbReference type="InterPro" id="IPR017975">
    <property type="entry name" value="Tubulin_CS"/>
</dbReference>
<dbReference type="InterPro" id="IPR003008">
    <property type="entry name" value="Tubulin_FtsZ_GTPase"/>
</dbReference>
<dbReference type="PANTHER" id="PTHR11588">
    <property type="entry name" value="TUBULIN"/>
    <property type="match status" value="1"/>
</dbReference>
<dbReference type="Pfam" id="PF00091">
    <property type="entry name" value="Tubulin"/>
    <property type="match status" value="1"/>
</dbReference>
<dbReference type="Pfam" id="PF03953">
    <property type="entry name" value="Tubulin_C"/>
    <property type="match status" value="1"/>
</dbReference>
<dbReference type="PRINTS" id="PR01163">
    <property type="entry name" value="BETATUBULIN"/>
</dbReference>
<dbReference type="PRINTS" id="PR01161">
    <property type="entry name" value="TUBULIN"/>
</dbReference>
<dbReference type="SMART" id="SM00864">
    <property type="entry name" value="Tubulin"/>
    <property type="match status" value="1"/>
</dbReference>
<dbReference type="SMART" id="SM00865">
    <property type="entry name" value="Tubulin_C"/>
    <property type="match status" value="1"/>
</dbReference>
<dbReference type="SUPFAM" id="SSF55307">
    <property type="entry name" value="Tubulin C-terminal domain-like"/>
    <property type="match status" value="1"/>
</dbReference>
<dbReference type="SUPFAM" id="SSF52490">
    <property type="entry name" value="Tubulin nucleotide-binding domain-like"/>
    <property type="match status" value="1"/>
</dbReference>
<dbReference type="PROSITE" id="PS00227">
    <property type="entry name" value="TUBULIN"/>
    <property type="match status" value="1"/>
</dbReference>
<dbReference type="PROSITE" id="PS00228">
    <property type="entry name" value="TUBULIN_B_AUTOREG"/>
    <property type="match status" value="1"/>
</dbReference>
<organism>
    <name type="scientific">Gadus morhua</name>
    <name type="common">Atlantic cod</name>
    <dbReference type="NCBI Taxonomy" id="8049"/>
    <lineage>
        <taxon>Eukaryota</taxon>
        <taxon>Metazoa</taxon>
        <taxon>Chordata</taxon>
        <taxon>Craniata</taxon>
        <taxon>Vertebrata</taxon>
        <taxon>Euteleostomi</taxon>
        <taxon>Actinopterygii</taxon>
        <taxon>Neopterygii</taxon>
        <taxon>Teleostei</taxon>
        <taxon>Neoteleostei</taxon>
        <taxon>Acanthomorphata</taxon>
        <taxon>Zeiogadaria</taxon>
        <taxon>Gadariae</taxon>
        <taxon>Gadiformes</taxon>
        <taxon>Gadoidei</taxon>
        <taxon>Gadidae</taxon>
        <taxon>Gadus</taxon>
    </lineage>
</organism>
<reference key="1">
    <citation type="journal article" date="1999" name="Cell Motil. Cytoskeleton">
        <title>Identification of betaIII- and betaIV-tubulin isotypes in cold-adapted microtubules from Atlantic cod (Gadus morhua): antibody mapping and cDNA sequencing.</title>
        <authorList>
            <person name="Modig C."/>
            <person name="Olsson P.-E."/>
            <person name="Barasoain I."/>
            <person name="de Ines C."/>
            <person name="Andreu J.M."/>
            <person name="Roach M.C."/>
            <person name="Luduena R.F."/>
            <person name="Wallin M."/>
        </authorList>
    </citation>
    <scope>NUCLEOTIDE SEQUENCE [MRNA]</scope>
    <source>
        <tissue>Brain</tissue>
    </source>
</reference>
<proteinExistence type="evidence at transcript level"/>
<comment type="function">
    <text>Tubulin is the major constituent of microtubules, a cylinder consisting of laterally associated linear protofilaments composed of alpha- and beta-tubulin heterodimers. Microtubules grow by the addition of GTP-tubulin dimers to the microtubule end, where a stabilizing cap forms. Below the cap, tubulin dimers are in GDP-bound state, owing to GTPase activity of alpha-tubulin.</text>
</comment>
<comment type="cofactor">
    <cofactor evidence="4">
        <name>Mg(2+)</name>
        <dbReference type="ChEBI" id="CHEBI:18420"/>
    </cofactor>
</comment>
<comment type="subunit">
    <text>Dimer of alpha and beta chains. A typical microtubule is a hollow water-filled tube with an outer diameter of 25 nm and an inner diameter of 15 nM. Alpha-beta heterodimers associate head-to-tail to form protofilaments running lengthwise along the microtubule wall with the beta-tubulin subunit facing the microtubule plus end conferring a structural polarity. Microtubules usually have 13 protofilaments but different protofilament numbers can be found in some organisms and specialized cells.</text>
</comment>
<comment type="subcellular location">
    <subcellularLocation>
        <location evidence="1">Cytoplasm</location>
        <location evidence="1">Cytoskeleton</location>
    </subcellularLocation>
</comment>
<comment type="domain">
    <text evidence="3">The MREI motif is common among all beta-tubulin isoforms and may be critical for tubulin autoregulation.</text>
</comment>
<comment type="PTM">
    <text evidence="2">Some glutamate residues at the C-terminus are polyglycylated, resulting in polyglycine chains on the gamma-carboxyl group. Glycylation is mainly limited to tubulin incorporated into axonemes (cilia and flagella) whereas glutamylation is prevalent in neuronal cells, centrioles, axonemes, and the mitotic spindle. Both modifications can coexist on the same protein on adjacent residues, and lowering polyglycylation levels increases polyglutamylation, and reciprocally. The precise function of polyglycylation is still unclear.</text>
</comment>
<comment type="PTM">
    <text evidence="2 7">Some glutamate residues at the C-terminus are polyglutamylated, resulting in polyglutamate chains on the gamma-carboxyl group (By similarity). Polyglutamylation plays a key role in microtubule severing by spastin (SPAST). SPAST preferentially recognizes and acts on microtubules decorated with short polyglutamate tails: severing activity by SPAST increases as the number of glutamates per tubulin rises from one to eight, but decreases beyond this glutamylation threshold (By similarity).</text>
</comment>
<comment type="similarity">
    <text evidence="9">Belongs to the tubulin family.</text>
</comment>
<protein>
    <recommendedName>
        <fullName>Tubulin beta-1 chain</fullName>
    </recommendedName>
    <alternativeName>
        <fullName>Beta-1-tubulin</fullName>
    </alternativeName>
</protein>
<feature type="chain" id="PRO_0000048269" description="Tubulin beta-1 chain">
    <location>
        <begin position="1"/>
        <end position="445"/>
    </location>
</feature>
<feature type="region of interest" description="Disordered" evidence="8">
    <location>
        <begin position="425"/>
        <end position="445"/>
    </location>
</feature>
<feature type="short sequence motif" description="MREI motif" evidence="3">
    <location>
        <begin position="1"/>
        <end position="4"/>
    </location>
</feature>
<feature type="compositionally biased region" description="Acidic residues" evidence="8">
    <location>
        <begin position="429"/>
        <end position="445"/>
    </location>
</feature>
<feature type="binding site" evidence="5">
    <location>
        <position position="11"/>
    </location>
    <ligand>
        <name>GTP</name>
        <dbReference type="ChEBI" id="CHEBI:37565"/>
    </ligand>
</feature>
<feature type="binding site" evidence="4">
    <location>
        <position position="69"/>
    </location>
    <ligand>
        <name>GTP</name>
        <dbReference type="ChEBI" id="CHEBI:37565"/>
    </ligand>
</feature>
<feature type="binding site" evidence="4">
    <location>
        <position position="69"/>
    </location>
    <ligand>
        <name>Mg(2+)</name>
        <dbReference type="ChEBI" id="CHEBI:18420"/>
    </ligand>
</feature>
<feature type="binding site" evidence="5">
    <location>
        <position position="138"/>
    </location>
    <ligand>
        <name>GTP</name>
        <dbReference type="ChEBI" id="CHEBI:37565"/>
    </ligand>
</feature>
<feature type="binding site" evidence="5">
    <location>
        <position position="142"/>
    </location>
    <ligand>
        <name>GTP</name>
        <dbReference type="ChEBI" id="CHEBI:37565"/>
    </ligand>
</feature>
<feature type="binding site" evidence="5">
    <location>
        <position position="143"/>
    </location>
    <ligand>
        <name>GTP</name>
        <dbReference type="ChEBI" id="CHEBI:37565"/>
    </ligand>
</feature>
<feature type="binding site" evidence="5">
    <location>
        <position position="144"/>
    </location>
    <ligand>
        <name>GTP</name>
        <dbReference type="ChEBI" id="CHEBI:37565"/>
    </ligand>
</feature>
<feature type="binding site" evidence="5">
    <location>
        <position position="204"/>
    </location>
    <ligand>
        <name>GTP</name>
        <dbReference type="ChEBI" id="CHEBI:37565"/>
    </ligand>
</feature>
<feature type="binding site" evidence="5">
    <location>
        <position position="226"/>
    </location>
    <ligand>
        <name>GTP</name>
        <dbReference type="ChEBI" id="CHEBI:37565"/>
    </ligand>
</feature>
<feature type="modified residue" description="5-glutamyl polyglutamate" evidence="6">
    <location>
        <position position="438"/>
    </location>
</feature>